<dbReference type="EC" id="2.7.1.21" evidence="1"/>
<dbReference type="EMBL" id="AY081866">
    <property type="protein sequence ID" value="AAL91131.1"/>
    <property type="molecule type" value="Genomic_DNA"/>
</dbReference>
<dbReference type="EMBL" id="AE015450">
    <property type="protein sequence ID" value="AAP57013.2"/>
    <property type="molecule type" value="Genomic_DNA"/>
</dbReference>
<dbReference type="RefSeq" id="WP_011113924.1">
    <property type="nucleotide sequence ID" value="NC_004829.2"/>
</dbReference>
<dbReference type="SMR" id="Q8RLE0"/>
<dbReference type="KEGG" id="mga:MGA_0502"/>
<dbReference type="HOGENOM" id="CLU_064400_3_0_14"/>
<dbReference type="OrthoDB" id="9781579at2"/>
<dbReference type="Proteomes" id="UP000001418">
    <property type="component" value="Chromosome"/>
</dbReference>
<dbReference type="GO" id="GO:0005829">
    <property type="term" value="C:cytosol"/>
    <property type="evidence" value="ECO:0007669"/>
    <property type="project" value="TreeGrafter"/>
</dbReference>
<dbReference type="GO" id="GO:0005524">
    <property type="term" value="F:ATP binding"/>
    <property type="evidence" value="ECO:0007669"/>
    <property type="project" value="UniProtKB-UniRule"/>
</dbReference>
<dbReference type="GO" id="GO:0004797">
    <property type="term" value="F:thymidine kinase activity"/>
    <property type="evidence" value="ECO:0007669"/>
    <property type="project" value="UniProtKB-UniRule"/>
</dbReference>
<dbReference type="GO" id="GO:0008270">
    <property type="term" value="F:zinc ion binding"/>
    <property type="evidence" value="ECO:0007669"/>
    <property type="project" value="UniProtKB-UniRule"/>
</dbReference>
<dbReference type="GO" id="GO:0071897">
    <property type="term" value="P:DNA biosynthetic process"/>
    <property type="evidence" value="ECO:0007669"/>
    <property type="project" value="UniProtKB-KW"/>
</dbReference>
<dbReference type="GO" id="GO:0046104">
    <property type="term" value="P:thymidine metabolic process"/>
    <property type="evidence" value="ECO:0007669"/>
    <property type="project" value="TreeGrafter"/>
</dbReference>
<dbReference type="Gene3D" id="3.30.60.20">
    <property type="match status" value="1"/>
</dbReference>
<dbReference type="Gene3D" id="3.40.50.300">
    <property type="entry name" value="P-loop containing nucleotide triphosphate hydrolases"/>
    <property type="match status" value="1"/>
</dbReference>
<dbReference type="HAMAP" id="MF_00124">
    <property type="entry name" value="Thymidine_kinase"/>
    <property type="match status" value="1"/>
</dbReference>
<dbReference type="InterPro" id="IPR027417">
    <property type="entry name" value="P-loop_NTPase"/>
</dbReference>
<dbReference type="InterPro" id="IPR001267">
    <property type="entry name" value="Thymidine_kinase"/>
</dbReference>
<dbReference type="InterPro" id="IPR020633">
    <property type="entry name" value="Thymidine_kinase_CS"/>
</dbReference>
<dbReference type="NCBIfam" id="NF003296">
    <property type="entry name" value="PRK04296.1-1"/>
    <property type="match status" value="1"/>
</dbReference>
<dbReference type="PANTHER" id="PTHR11441">
    <property type="entry name" value="THYMIDINE KINASE"/>
    <property type="match status" value="1"/>
</dbReference>
<dbReference type="PANTHER" id="PTHR11441:SF0">
    <property type="entry name" value="THYMIDINE KINASE, CYTOSOLIC"/>
    <property type="match status" value="1"/>
</dbReference>
<dbReference type="Pfam" id="PF00265">
    <property type="entry name" value="TK"/>
    <property type="match status" value="1"/>
</dbReference>
<dbReference type="PIRSF" id="PIRSF035805">
    <property type="entry name" value="TK_cell"/>
    <property type="match status" value="1"/>
</dbReference>
<dbReference type="SUPFAM" id="SSF57716">
    <property type="entry name" value="Glucocorticoid receptor-like (DNA-binding domain)"/>
    <property type="match status" value="1"/>
</dbReference>
<dbReference type="SUPFAM" id="SSF52540">
    <property type="entry name" value="P-loop containing nucleoside triphosphate hydrolases"/>
    <property type="match status" value="1"/>
</dbReference>
<dbReference type="PROSITE" id="PS00603">
    <property type="entry name" value="TK_CELLULAR_TYPE"/>
    <property type="match status" value="1"/>
</dbReference>
<proteinExistence type="inferred from homology"/>
<accession>Q8RLE0</accession>
<protein>
    <recommendedName>
        <fullName evidence="1">Thymidine kinase</fullName>
        <ecNumber evidence="1">2.7.1.21</ecNumber>
    </recommendedName>
</protein>
<feature type="chain" id="PRO_0000174993" description="Thymidine kinase">
    <location>
        <begin position="1"/>
        <end position="224"/>
    </location>
</feature>
<feature type="active site" description="Proton acceptor" evidence="1">
    <location>
        <position position="94"/>
    </location>
</feature>
<feature type="binding site" evidence="1">
    <location>
        <begin position="19"/>
        <end position="26"/>
    </location>
    <ligand>
        <name>ATP</name>
        <dbReference type="ChEBI" id="CHEBI:30616"/>
    </ligand>
</feature>
<feature type="binding site" evidence="1">
    <location>
        <begin position="93"/>
        <end position="96"/>
    </location>
    <ligand>
        <name>ATP</name>
        <dbReference type="ChEBI" id="CHEBI:30616"/>
    </ligand>
</feature>
<feature type="binding site" evidence="1">
    <location>
        <position position="150"/>
    </location>
    <ligand>
        <name>Zn(2+)</name>
        <dbReference type="ChEBI" id="CHEBI:29105"/>
    </ligand>
</feature>
<feature type="binding site" evidence="1">
    <location>
        <position position="153"/>
    </location>
    <ligand>
        <name>Zn(2+)</name>
        <dbReference type="ChEBI" id="CHEBI:29105"/>
    </ligand>
</feature>
<feature type="binding site" evidence="1">
    <location>
        <position position="188"/>
    </location>
    <ligand>
        <name>Zn(2+)</name>
        <dbReference type="ChEBI" id="CHEBI:29105"/>
    </ligand>
</feature>
<feature type="binding site" evidence="1">
    <location>
        <position position="191"/>
    </location>
    <ligand>
        <name>Zn(2+)</name>
        <dbReference type="ChEBI" id="CHEBI:29105"/>
    </ligand>
</feature>
<feature type="sequence conflict" description="In Ref. 1; AAL91131." evidence="2" ref="1">
    <original>T</original>
    <variation>S</variation>
    <location>
        <position position="10"/>
    </location>
</feature>
<sequence length="224" mass="25259">MAKKNAMTTTNGWIEAICGPMFAGKTDELIRKIKRYEYADVKSLVFSPATDTRSAQEIINSRDGRRIGSIKIKKAFEIYDYVLLHKPQLVGIDEVQFFDDSIVEVIQTLADNQINVIVAGLDRDFRGEPFGPIPKILGIAESVIRLTAICSECGAEASRSQRLIDNQPADYNCETILIGDTESYAPRCRHHHKVPNRPINDQTKNFKRALKNNFDKIVEQSSKD</sequence>
<evidence type="ECO:0000255" key="1">
    <source>
        <dbReference type="HAMAP-Rule" id="MF_00124"/>
    </source>
</evidence>
<evidence type="ECO:0000305" key="2"/>
<reference key="1">
    <citation type="submission" date="2002-03" db="EMBL/GenBank/DDBJ databases">
        <authorList>
            <person name="Skamrov A.V."/>
            <person name="Gol'dman M.A."/>
            <person name="Feoktistova E.S."/>
            <person name="Bibilashvili R.S."/>
        </authorList>
    </citation>
    <scope>NUCLEOTIDE SEQUENCE [GENOMIC DNA]</scope>
    <source>
        <strain>A5969Var.B</strain>
    </source>
</reference>
<reference key="2">
    <citation type="journal article" date="2003" name="Microbiology">
        <title>The complete genome sequence of the avian pathogen Mycoplasma gallisepticum strain R(low).</title>
        <authorList>
            <person name="Papazisi L."/>
            <person name="Gorton T.S."/>
            <person name="Kutish G."/>
            <person name="Markham P.F."/>
            <person name="Browning G.F."/>
            <person name="Nguyen D.K."/>
            <person name="Swartzell S."/>
            <person name="Madan A."/>
            <person name="Mahairas G."/>
            <person name="Geary S.J."/>
        </authorList>
    </citation>
    <scope>NUCLEOTIDE SEQUENCE [LARGE SCALE GENOMIC DNA]</scope>
    <source>
        <strain>R(low / passage 15 / clone 2)</strain>
    </source>
</reference>
<organism>
    <name type="scientific">Mycoplasmoides gallisepticum (strain R(low / passage 15 / clone 2))</name>
    <name type="common">Mycoplasma gallisepticum</name>
    <dbReference type="NCBI Taxonomy" id="710127"/>
    <lineage>
        <taxon>Bacteria</taxon>
        <taxon>Bacillati</taxon>
        <taxon>Mycoplasmatota</taxon>
        <taxon>Mycoplasmoidales</taxon>
        <taxon>Mycoplasmoidaceae</taxon>
        <taxon>Mycoplasmoides</taxon>
    </lineage>
</organism>
<comment type="catalytic activity">
    <reaction evidence="1">
        <text>thymidine + ATP = dTMP + ADP + H(+)</text>
        <dbReference type="Rhea" id="RHEA:19129"/>
        <dbReference type="ChEBI" id="CHEBI:15378"/>
        <dbReference type="ChEBI" id="CHEBI:17748"/>
        <dbReference type="ChEBI" id="CHEBI:30616"/>
        <dbReference type="ChEBI" id="CHEBI:63528"/>
        <dbReference type="ChEBI" id="CHEBI:456216"/>
        <dbReference type="EC" id="2.7.1.21"/>
    </reaction>
</comment>
<comment type="subunit">
    <text evidence="1">Homotetramer.</text>
</comment>
<comment type="subcellular location">
    <subcellularLocation>
        <location evidence="1">Cytoplasm</location>
    </subcellularLocation>
</comment>
<comment type="similarity">
    <text evidence="1">Belongs to the thymidine kinase family.</text>
</comment>
<name>KITH_MYCGA</name>
<keyword id="KW-0067">ATP-binding</keyword>
<keyword id="KW-0963">Cytoplasm</keyword>
<keyword id="KW-0237">DNA synthesis</keyword>
<keyword id="KW-0418">Kinase</keyword>
<keyword id="KW-0479">Metal-binding</keyword>
<keyword id="KW-0547">Nucleotide-binding</keyword>
<keyword id="KW-1185">Reference proteome</keyword>
<keyword id="KW-0808">Transferase</keyword>
<keyword id="KW-0862">Zinc</keyword>
<gene>
    <name evidence="1" type="primary">tdk</name>
    <name type="ordered locus">MYCGA6630</name>
    <name type="ORF">MGA_0502</name>
</gene>